<keyword id="KW-0143">Chaperone</keyword>
<keyword id="KW-0963">Cytoplasm</keyword>
<keyword id="KW-0690">Ribosome biogenesis</keyword>
<keyword id="KW-0698">rRNA processing</keyword>
<organism>
    <name type="scientific">Rickettsia akari (strain Hartford)</name>
    <dbReference type="NCBI Taxonomy" id="293614"/>
    <lineage>
        <taxon>Bacteria</taxon>
        <taxon>Pseudomonadati</taxon>
        <taxon>Pseudomonadota</taxon>
        <taxon>Alphaproteobacteria</taxon>
        <taxon>Rickettsiales</taxon>
        <taxon>Rickettsiaceae</taxon>
        <taxon>Rickettsieae</taxon>
        <taxon>Rickettsia</taxon>
        <taxon>spotted fever group</taxon>
    </lineage>
</organism>
<protein>
    <recommendedName>
        <fullName evidence="1">Ribosome maturation factor RimM</fullName>
    </recommendedName>
</protein>
<comment type="function">
    <text evidence="1">An accessory protein needed during the final step in the assembly of 30S ribosomal subunit, possibly for assembly of the head region. Essential for efficient processing of 16S rRNA. May be needed both before and after RbfA during the maturation of 16S rRNA. It has affinity for free ribosomal 30S subunits but not for 70S ribosomes.</text>
</comment>
<comment type="subunit">
    <text evidence="1">Binds ribosomal protein uS19.</text>
</comment>
<comment type="subcellular location">
    <subcellularLocation>
        <location evidence="1">Cytoplasm</location>
    </subcellularLocation>
</comment>
<comment type="domain">
    <text evidence="1">The PRC barrel domain binds ribosomal protein uS19.</text>
</comment>
<comment type="similarity">
    <text evidence="1">Belongs to the RimM family.</text>
</comment>
<gene>
    <name evidence="1" type="primary">rimM</name>
    <name type="ordered locus">A1C_02610</name>
</gene>
<sequence length="165" mass="18723">MNSLENLILVGVIKSCHGIKGHVILKSFTEPATKILAKNLVNESREDIHIQLISQNAKGELICRFNDITTRNEAENLKGYKIFCLRASLPEPAEDEFYIADLNHLPVLDPNHKEIGKIKNILNFGAGDIIEIEFLDQTTELLPFNKEFFPVITKDYVTLNYQRGV</sequence>
<dbReference type="EMBL" id="CP000847">
    <property type="protein sequence ID" value="ABV74819.1"/>
    <property type="molecule type" value="Genomic_DNA"/>
</dbReference>
<dbReference type="RefSeq" id="WP_012149453.1">
    <property type="nucleotide sequence ID" value="NC_009881.1"/>
</dbReference>
<dbReference type="SMR" id="A8GN44"/>
<dbReference type="STRING" id="293614.A1C_02610"/>
<dbReference type="KEGG" id="rak:A1C_02610"/>
<dbReference type="eggNOG" id="COG0806">
    <property type="taxonomic scope" value="Bacteria"/>
</dbReference>
<dbReference type="HOGENOM" id="CLU_077636_0_1_5"/>
<dbReference type="Proteomes" id="UP000006830">
    <property type="component" value="Chromosome"/>
</dbReference>
<dbReference type="GO" id="GO:0005737">
    <property type="term" value="C:cytoplasm"/>
    <property type="evidence" value="ECO:0007669"/>
    <property type="project" value="UniProtKB-SubCell"/>
</dbReference>
<dbReference type="GO" id="GO:0005840">
    <property type="term" value="C:ribosome"/>
    <property type="evidence" value="ECO:0007669"/>
    <property type="project" value="InterPro"/>
</dbReference>
<dbReference type="GO" id="GO:0043022">
    <property type="term" value="F:ribosome binding"/>
    <property type="evidence" value="ECO:0007669"/>
    <property type="project" value="InterPro"/>
</dbReference>
<dbReference type="GO" id="GO:0042274">
    <property type="term" value="P:ribosomal small subunit biogenesis"/>
    <property type="evidence" value="ECO:0007669"/>
    <property type="project" value="UniProtKB-UniRule"/>
</dbReference>
<dbReference type="GO" id="GO:0006364">
    <property type="term" value="P:rRNA processing"/>
    <property type="evidence" value="ECO:0007669"/>
    <property type="project" value="UniProtKB-UniRule"/>
</dbReference>
<dbReference type="Gene3D" id="2.30.30.240">
    <property type="entry name" value="PRC-barrel domain"/>
    <property type="match status" value="1"/>
</dbReference>
<dbReference type="Gene3D" id="2.40.30.60">
    <property type="entry name" value="RimM"/>
    <property type="match status" value="1"/>
</dbReference>
<dbReference type="HAMAP" id="MF_00014">
    <property type="entry name" value="Ribosome_mat_RimM"/>
    <property type="match status" value="1"/>
</dbReference>
<dbReference type="InterPro" id="IPR027275">
    <property type="entry name" value="PRC-brl_dom"/>
</dbReference>
<dbReference type="InterPro" id="IPR011033">
    <property type="entry name" value="PRC_barrel-like_sf"/>
</dbReference>
<dbReference type="InterPro" id="IPR011961">
    <property type="entry name" value="RimM"/>
</dbReference>
<dbReference type="InterPro" id="IPR002676">
    <property type="entry name" value="RimM_N"/>
</dbReference>
<dbReference type="InterPro" id="IPR036976">
    <property type="entry name" value="RimM_N_sf"/>
</dbReference>
<dbReference type="InterPro" id="IPR009000">
    <property type="entry name" value="Transl_B-barrel_sf"/>
</dbReference>
<dbReference type="NCBIfam" id="TIGR02273">
    <property type="entry name" value="16S_RimM"/>
    <property type="match status" value="1"/>
</dbReference>
<dbReference type="PANTHER" id="PTHR33692">
    <property type="entry name" value="RIBOSOME MATURATION FACTOR RIMM"/>
    <property type="match status" value="1"/>
</dbReference>
<dbReference type="PANTHER" id="PTHR33692:SF1">
    <property type="entry name" value="RIBOSOME MATURATION FACTOR RIMM"/>
    <property type="match status" value="1"/>
</dbReference>
<dbReference type="Pfam" id="PF05239">
    <property type="entry name" value="PRC"/>
    <property type="match status" value="1"/>
</dbReference>
<dbReference type="Pfam" id="PF01782">
    <property type="entry name" value="RimM"/>
    <property type="match status" value="1"/>
</dbReference>
<dbReference type="SUPFAM" id="SSF50346">
    <property type="entry name" value="PRC-barrel domain"/>
    <property type="match status" value="1"/>
</dbReference>
<dbReference type="SUPFAM" id="SSF50447">
    <property type="entry name" value="Translation proteins"/>
    <property type="match status" value="1"/>
</dbReference>
<evidence type="ECO:0000255" key="1">
    <source>
        <dbReference type="HAMAP-Rule" id="MF_00014"/>
    </source>
</evidence>
<feature type="chain" id="PRO_1000001227" description="Ribosome maturation factor RimM">
    <location>
        <begin position="1"/>
        <end position="165"/>
    </location>
</feature>
<feature type="domain" description="PRC barrel" evidence="1">
    <location>
        <begin position="94"/>
        <end position="163"/>
    </location>
</feature>
<accession>A8GN44</accession>
<name>RIMM_RICAH</name>
<reference key="1">
    <citation type="submission" date="2007-09" db="EMBL/GenBank/DDBJ databases">
        <title>Complete genome sequence of Rickettsia akari.</title>
        <authorList>
            <person name="Madan A."/>
            <person name="Fahey J."/>
            <person name="Helton E."/>
            <person name="Ketteman M."/>
            <person name="Madan A."/>
            <person name="Rodrigues S."/>
            <person name="Sanchez A."/>
            <person name="Whiting M."/>
            <person name="Dasch G."/>
            <person name="Eremeeva M."/>
        </authorList>
    </citation>
    <scope>NUCLEOTIDE SEQUENCE [LARGE SCALE GENOMIC DNA]</scope>
    <source>
        <strain>Hartford</strain>
    </source>
</reference>
<proteinExistence type="inferred from homology"/>